<dbReference type="EC" id="2.6.1.2"/>
<dbReference type="EMBL" id="BC134583">
    <property type="protein sequence ID" value="AAI34584.1"/>
    <property type="molecule type" value="mRNA"/>
</dbReference>
<dbReference type="RefSeq" id="NP_001077209.1">
    <property type="nucleotide sequence ID" value="NM_001083740.2"/>
</dbReference>
<dbReference type="SMR" id="A4IFH5"/>
<dbReference type="FunCoup" id="A4IFH5">
    <property type="interactions" value="908"/>
</dbReference>
<dbReference type="STRING" id="9913.ENSBTAP00000010309"/>
<dbReference type="PaxDb" id="9913-ENSBTAP00000010309"/>
<dbReference type="Ensembl" id="ENSBTAT00000089844.1">
    <property type="protein sequence ID" value="ENSBTAP00000079284.1"/>
    <property type="gene ID" value="ENSBTAG00000007835.6"/>
</dbReference>
<dbReference type="GeneID" id="539188"/>
<dbReference type="KEGG" id="bta:539188"/>
<dbReference type="CTD" id="2875"/>
<dbReference type="VGNC" id="VGNC:29616">
    <property type="gene designation" value="GPT"/>
</dbReference>
<dbReference type="eggNOG" id="KOG0258">
    <property type="taxonomic scope" value="Eukaryota"/>
</dbReference>
<dbReference type="GeneTree" id="ENSGT00940000155265"/>
<dbReference type="HOGENOM" id="CLU_014254_3_1_1"/>
<dbReference type="InParanoid" id="A4IFH5"/>
<dbReference type="OrthoDB" id="1732682at2759"/>
<dbReference type="TreeFam" id="TF300839"/>
<dbReference type="UniPathway" id="UPA00528">
    <property type="reaction ID" value="UER00586"/>
</dbReference>
<dbReference type="Proteomes" id="UP000009136">
    <property type="component" value="Chromosome 14"/>
</dbReference>
<dbReference type="GO" id="GO:0005737">
    <property type="term" value="C:cytoplasm"/>
    <property type="evidence" value="ECO:0007669"/>
    <property type="project" value="UniProtKB-SubCell"/>
</dbReference>
<dbReference type="GO" id="GO:0004021">
    <property type="term" value="F:L-alanine:2-oxoglutarate aminotransferase activity"/>
    <property type="evidence" value="ECO:0007669"/>
    <property type="project" value="UniProtKB-EC"/>
</dbReference>
<dbReference type="GO" id="GO:0030170">
    <property type="term" value="F:pyridoxal phosphate binding"/>
    <property type="evidence" value="ECO:0007669"/>
    <property type="project" value="InterPro"/>
</dbReference>
<dbReference type="GO" id="GO:0009058">
    <property type="term" value="P:biosynthetic process"/>
    <property type="evidence" value="ECO:0007669"/>
    <property type="project" value="InterPro"/>
</dbReference>
<dbReference type="GO" id="GO:0042853">
    <property type="term" value="P:L-alanine catabolic process"/>
    <property type="evidence" value="ECO:0007669"/>
    <property type="project" value="UniProtKB-UniPathway"/>
</dbReference>
<dbReference type="CDD" id="cd00609">
    <property type="entry name" value="AAT_like"/>
    <property type="match status" value="1"/>
</dbReference>
<dbReference type="FunFam" id="1.10.287.1970:FF:000001">
    <property type="entry name" value="Alanine aminotransferase 2"/>
    <property type="match status" value="1"/>
</dbReference>
<dbReference type="FunFam" id="3.40.640.10:FF:000236">
    <property type="entry name" value="Alanine aminotransferase 2"/>
    <property type="match status" value="1"/>
</dbReference>
<dbReference type="FunFam" id="3.90.1150.10:FF:000010">
    <property type="entry name" value="Alanine aminotransferase 2"/>
    <property type="match status" value="1"/>
</dbReference>
<dbReference type="Gene3D" id="1.10.287.1970">
    <property type="match status" value="1"/>
</dbReference>
<dbReference type="Gene3D" id="3.90.1150.10">
    <property type="entry name" value="Aspartate Aminotransferase, domain 1"/>
    <property type="match status" value="1"/>
</dbReference>
<dbReference type="Gene3D" id="3.40.640.10">
    <property type="entry name" value="Type I PLP-dependent aspartate aminotransferase-like (Major domain)"/>
    <property type="match status" value="1"/>
</dbReference>
<dbReference type="InterPro" id="IPR045088">
    <property type="entry name" value="ALAT1/2-like"/>
</dbReference>
<dbReference type="InterPro" id="IPR004839">
    <property type="entry name" value="Aminotransferase_I/II_large"/>
</dbReference>
<dbReference type="InterPro" id="IPR015424">
    <property type="entry name" value="PyrdxlP-dep_Trfase"/>
</dbReference>
<dbReference type="InterPro" id="IPR015421">
    <property type="entry name" value="PyrdxlP-dep_Trfase_major"/>
</dbReference>
<dbReference type="InterPro" id="IPR015422">
    <property type="entry name" value="PyrdxlP-dep_Trfase_small"/>
</dbReference>
<dbReference type="PANTHER" id="PTHR11751">
    <property type="entry name" value="ALANINE AMINOTRANSFERASE"/>
    <property type="match status" value="1"/>
</dbReference>
<dbReference type="PANTHER" id="PTHR11751:SF308">
    <property type="entry name" value="ALANINE AMINOTRANSFERASE 1"/>
    <property type="match status" value="1"/>
</dbReference>
<dbReference type="Pfam" id="PF00155">
    <property type="entry name" value="Aminotran_1_2"/>
    <property type="match status" value="1"/>
</dbReference>
<dbReference type="SUPFAM" id="SSF53383">
    <property type="entry name" value="PLP-dependent transferases"/>
    <property type="match status" value="1"/>
</dbReference>
<reference key="1">
    <citation type="submission" date="2007-03" db="EMBL/GenBank/DDBJ databases">
        <authorList>
            <consortium name="NIH - Mammalian Gene Collection (MGC) project"/>
        </authorList>
    </citation>
    <scope>NUCLEOTIDE SEQUENCE [LARGE SCALE MRNA]</scope>
    <source>
        <strain>Hereford</strain>
        <tissue>Hypothalamus</tissue>
    </source>
</reference>
<organism>
    <name type="scientific">Bos taurus</name>
    <name type="common">Bovine</name>
    <dbReference type="NCBI Taxonomy" id="9913"/>
    <lineage>
        <taxon>Eukaryota</taxon>
        <taxon>Metazoa</taxon>
        <taxon>Chordata</taxon>
        <taxon>Craniata</taxon>
        <taxon>Vertebrata</taxon>
        <taxon>Euteleostomi</taxon>
        <taxon>Mammalia</taxon>
        <taxon>Eutheria</taxon>
        <taxon>Laurasiatheria</taxon>
        <taxon>Artiodactyla</taxon>
        <taxon>Ruminantia</taxon>
        <taxon>Pecora</taxon>
        <taxon>Bovidae</taxon>
        <taxon>Bovinae</taxon>
        <taxon>Bos</taxon>
    </lineage>
</organism>
<name>ALAT1_BOVIN</name>
<gene>
    <name type="primary">GPT</name>
    <name type="synonym">GPT1</name>
</gene>
<proteinExistence type="evidence at transcript level"/>
<feature type="initiator methionine" description="Removed" evidence="2">
    <location>
        <position position="1"/>
    </location>
</feature>
<feature type="chain" id="PRO_0000328385" description="Alanine aminotransferase 1">
    <location>
        <begin position="2"/>
        <end position="496"/>
    </location>
</feature>
<feature type="modified residue" description="N-acetylalanine" evidence="2">
    <location>
        <position position="2"/>
    </location>
</feature>
<feature type="modified residue" description="Phosphothreonine" evidence="2">
    <location>
        <position position="22"/>
    </location>
</feature>
<feature type="modified residue" description="N6-(pyridoxal phosphate)lysine" evidence="1">
    <location>
        <position position="314"/>
    </location>
</feature>
<evidence type="ECO:0000250" key="1"/>
<evidence type="ECO:0000250" key="2">
    <source>
        <dbReference type="UniProtKB" id="P24298"/>
    </source>
</evidence>
<evidence type="ECO:0000305" key="3"/>
<accession>A4IFH5</accession>
<sequence>MALRAGEHSQEAANGLKEKVLTLDSMNPYVRRVEYAVRGPIVQRALELEQELRQGVKKPFTEVIRANIGDAQAMGQIPITFPRQVLALCVHPDLLNSPDFPDDAKRRAERILQACGGHSLGAYSISAGVQMIREDVARYIERRDGGIPADPNNIFLSTGASDAIVTVLKLLVTGEGRTRTGVLIPIPQYPLYSAALAEFNAVQVDYYLDEERAWALDVAELRRALRQARDHCRPRALCVINPGNPTGQVQTRECIEDVIRFAYEEKLFLLADEVYQDNVYAESSQFHSFKKVLTEMGPPYAAQQELASFHSISKGYMGECGFRGGYVEVVNMDAAVKQQMQKLRSVRLCPPTPGQVLLDVAVSPPAPSDPSFPRFQAERRAVLAELAAKAKLTEQVFNEAPGIRCNPVQGAMYSFPRVQLPPRAVQRAQELGLAPDMFFCLRLLEETGICVVPGSGFGQREGTYHFRMTILPPMEKLRPLLEKLSQFHAKFTREYS</sequence>
<protein>
    <recommendedName>
        <fullName>Alanine aminotransferase 1</fullName>
        <shortName>ALT1</shortName>
        <ecNumber>2.6.1.2</ecNumber>
    </recommendedName>
    <alternativeName>
        <fullName>Glutamate pyruvate transaminase 1</fullName>
        <shortName>GPT 1</shortName>
    </alternativeName>
    <alternativeName>
        <fullName>Glutamic--alanine transaminase 1</fullName>
    </alternativeName>
    <alternativeName>
        <fullName>Glutamic--pyruvic transaminase 1</fullName>
    </alternativeName>
</protein>
<comment type="function">
    <text evidence="1">Catalyzes the reversible transamination between alanine and 2-oxoglutarate to form pyruvate and glutamate. Participates in cellular nitrogen metabolism and also in liver gluconeogenesis starting with precursors transported from skeletal muscles (By similarity).</text>
</comment>
<comment type="catalytic activity">
    <reaction>
        <text>L-alanine + 2-oxoglutarate = pyruvate + L-glutamate</text>
        <dbReference type="Rhea" id="RHEA:19453"/>
        <dbReference type="ChEBI" id="CHEBI:15361"/>
        <dbReference type="ChEBI" id="CHEBI:16810"/>
        <dbReference type="ChEBI" id="CHEBI:29985"/>
        <dbReference type="ChEBI" id="CHEBI:57972"/>
        <dbReference type="EC" id="2.6.1.2"/>
    </reaction>
</comment>
<comment type="cofactor">
    <cofactor evidence="1">
        <name>pyridoxal 5'-phosphate</name>
        <dbReference type="ChEBI" id="CHEBI:597326"/>
    </cofactor>
</comment>
<comment type="pathway">
    <text>Amino-acid degradation; L-alanine degradation via transaminase pathway; pyruvate from L-alanine: step 1/1.</text>
</comment>
<comment type="subunit">
    <text evidence="1">Homodimer.</text>
</comment>
<comment type="subcellular location">
    <subcellularLocation>
        <location evidence="1">Cytoplasm</location>
    </subcellularLocation>
</comment>
<comment type="similarity">
    <text evidence="3">Belongs to the class-I pyridoxal-phosphate-dependent aminotransferase family. Alanine aminotransferase subfamily.</text>
</comment>
<keyword id="KW-0007">Acetylation</keyword>
<keyword id="KW-0032">Aminotransferase</keyword>
<keyword id="KW-0963">Cytoplasm</keyword>
<keyword id="KW-0597">Phosphoprotein</keyword>
<keyword id="KW-0663">Pyridoxal phosphate</keyword>
<keyword id="KW-1185">Reference proteome</keyword>
<keyword id="KW-0808">Transferase</keyword>